<organism>
    <name type="scientific">Clostridium botulinum (strain Loch Maree / Type A3)</name>
    <dbReference type="NCBI Taxonomy" id="498214"/>
    <lineage>
        <taxon>Bacteria</taxon>
        <taxon>Bacillati</taxon>
        <taxon>Bacillota</taxon>
        <taxon>Clostridia</taxon>
        <taxon>Eubacteriales</taxon>
        <taxon>Clostridiaceae</taxon>
        <taxon>Clostridium</taxon>
    </lineage>
</organism>
<accession>B1KSK0</accession>
<evidence type="ECO:0000255" key="1">
    <source>
        <dbReference type="HAMAP-Rule" id="MF_00251"/>
    </source>
</evidence>
<evidence type="ECO:0000305" key="2"/>
<proteinExistence type="inferred from homology"/>
<name>RL36_CLOBM</name>
<comment type="similarity">
    <text evidence="1">Belongs to the bacterial ribosomal protein bL36 family.</text>
</comment>
<reference key="1">
    <citation type="journal article" date="2007" name="PLoS ONE">
        <title>Analysis of the neurotoxin complex genes in Clostridium botulinum A1-A4 and B1 strains: BoNT/A3, /Ba4 and /B1 clusters are located within plasmids.</title>
        <authorList>
            <person name="Smith T.J."/>
            <person name="Hill K.K."/>
            <person name="Foley B.T."/>
            <person name="Detter J.C."/>
            <person name="Munk A.C."/>
            <person name="Bruce D.C."/>
            <person name="Doggett N.A."/>
            <person name="Smith L.A."/>
            <person name="Marks J.D."/>
            <person name="Xie G."/>
            <person name="Brettin T.S."/>
        </authorList>
    </citation>
    <scope>NUCLEOTIDE SEQUENCE [LARGE SCALE GENOMIC DNA]</scope>
    <source>
        <strain>Loch Maree / Type A3</strain>
    </source>
</reference>
<feature type="chain" id="PRO_1000101021" description="Large ribosomal subunit protein bL36">
    <location>
        <begin position="1"/>
        <end position="37"/>
    </location>
</feature>
<keyword id="KW-0687">Ribonucleoprotein</keyword>
<keyword id="KW-0689">Ribosomal protein</keyword>
<gene>
    <name evidence="1" type="primary">rpmJ</name>
    <name type="ordered locus">CLK_2899</name>
</gene>
<sequence length="37" mass="4305">MKVRPSVKPICEKCKVIRRKGKVMVICENPKHKQKQG</sequence>
<protein>
    <recommendedName>
        <fullName evidence="1">Large ribosomal subunit protein bL36</fullName>
    </recommendedName>
    <alternativeName>
        <fullName evidence="2">50S ribosomal protein L36</fullName>
    </alternativeName>
</protein>
<dbReference type="EMBL" id="CP000962">
    <property type="protein sequence ID" value="ACA54393.1"/>
    <property type="molecule type" value="Genomic_DNA"/>
</dbReference>
<dbReference type="RefSeq" id="WP_003156543.1">
    <property type="nucleotide sequence ID" value="NC_010520.1"/>
</dbReference>
<dbReference type="SMR" id="B1KSK0"/>
<dbReference type="GeneID" id="97412846"/>
<dbReference type="KEGG" id="cbl:CLK_2899"/>
<dbReference type="HOGENOM" id="CLU_135723_6_2_9"/>
<dbReference type="GO" id="GO:0005737">
    <property type="term" value="C:cytoplasm"/>
    <property type="evidence" value="ECO:0007669"/>
    <property type="project" value="UniProtKB-ARBA"/>
</dbReference>
<dbReference type="GO" id="GO:1990904">
    <property type="term" value="C:ribonucleoprotein complex"/>
    <property type="evidence" value="ECO:0007669"/>
    <property type="project" value="UniProtKB-KW"/>
</dbReference>
<dbReference type="GO" id="GO:0005840">
    <property type="term" value="C:ribosome"/>
    <property type="evidence" value="ECO:0007669"/>
    <property type="project" value="UniProtKB-KW"/>
</dbReference>
<dbReference type="GO" id="GO:0003735">
    <property type="term" value="F:structural constituent of ribosome"/>
    <property type="evidence" value="ECO:0007669"/>
    <property type="project" value="InterPro"/>
</dbReference>
<dbReference type="GO" id="GO:0006412">
    <property type="term" value="P:translation"/>
    <property type="evidence" value="ECO:0007669"/>
    <property type="project" value="UniProtKB-UniRule"/>
</dbReference>
<dbReference type="HAMAP" id="MF_00251">
    <property type="entry name" value="Ribosomal_bL36"/>
    <property type="match status" value="1"/>
</dbReference>
<dbReference type="InterPro" id="IPR000473">
    <property type="entry name" value="Ribosomal_bL36"/>
</dbReference>
<dbReference type="InterPro" id="IPR035977">
    <property type="entry name" value="Ribosomal_bL36_sp"/>
</dbReference>
<dbReference type="NCBIfam" id="TIGR01022">
    <property type="entry name" value="rpmJ_bact"/>
    <property type="match status" value="1"/>
</dbReference>
<dbReference type="PANTHER" id="PTHR42888">
    <property type="entry name" value="50S RIBOSOMAL PROTEIN L36, CHLOROPLASTIC"/>
    <property type="match status" value="1"/>
</dbReference>
<dbReference type="PANTHER" id="PTHR42888:SF1">
    <property type="entry name" value="LARGE RIBOSOMAL SUBUNIT PROTEIN BL36C"/>
    <property type="match status" value="1"/>
</dbReference>
<dbReference type="Pfam" id="PF00444">
    <property type="entry name" value="Ribosomal_L36"/>
    <property type="match status" value="1"/>
</dbReference>
<dbReference type="SUPFAM" id="SSF57840">
    <property type="entry name" value="Ribosomal protein L36"/>
    <property type="match status" value="1"/>
</dbReference>
<dbReference type="PROSITE" id="PS00828">
    <property type="entry name" value="RIBOSOMAL_L36"/>
    <property type="match status" value="1"/>
</dbReference>